<keyword id="KW-0687">Ribonucleoprotein</keyword>
<keyword id="KW-0689">Ribosomal protein</keyword>
<keyword id="KW-0694">RNA-binding</keyword>
<keyword id="KW-0699">rRNA-binding</keyword>
<gene>
    <name evidence="1" type="primary">rplR</name>
    <name type="ordered locus">MHP7448_0178</name>
</gene>
<sequence length="121" mass="14313">MQKSRNYYRKVKHVRILKKLKSNREDKQKYRIGVYKSLRNFYAYIFDPWKNKVITSVSTLDKSNGYKGNIVSASSLAPDLYKKMKKLNLENESYIFDRSGYLFHGRVKAFANALRDQGVKF</sequence>
<comment type="function">
    <text evidence="1">This is one of the proteins that bind and probably mediate the attachment of the 5S RNA into the large ribosomal subunit, where it forms part of the central protuberance.</text>
</comment>
<comment type="subunit">
    <text evidence="1">Part of the 50S ribosomal subunit; part of the 5S rRNA/L5/L18/L25 subcomplex. Contacts the 5S and 23S rRNAs.</text>
</comment>
<comment type="similarity">
    <text evidence="1">Belongs to the universal ribosomal protein uL18 family.</text>
</comment>
<evidence type="ECO:0000255" key="1">
    <source>
        <dbReference type="HAMAP-Rule" id="MF_01337"/>
    </source>
</evidence>
<evidence type="ECO:0000305" key="2"/>
<accession>Q4A8I7</accession>
<organism>
    <name type="scientific">Mesomycoplasma hyopneumoniae (strain 7448)</name>
    <name type="common">Mycoplasma hyopneumoniae</name>
    <dbReference type="NCBI Taxonomy" id="262722"/>
    <lineage>
        <taxon>Bacteria</taxon>
        <taxon>Bacillati</taxon>
        <taxon>Mycoplasmatota</taxon>
        <taxon>Mycoplasmoidales</taxon>
        <taxon>Metamycoplasmataceae</taxon>
        <taxon>Mesomycoplasma</taxon>
    </lineage>
</organism>
<name>RL18_MESH7</name>
<feature type="chain" id="PRO_0000251330" description="Large ribosomal subunit protein uL18">
    <location>
        <begin position="1"/>
        <end position="121"/>
    </location>
</feature>
<reference key="1">
    <citation type="journal article" date="2005" name="J. Bacteriol.">
        <title>Swine and poultry pathogens: the complete genome sequences of two strains of Mycoplasma hyopneumoniae and a strain of Mycoplasma synoviae.</title>
        <authorList>
            <person name="Vasconcelos A.T.R."/>
            <person name="Ferreira H.B."/>
            <person name="Bizarro C.V."/>
            <person name="Bonatto S.L."/>
            <person name="Carvalho M.O."/>
            <person name="Pinto P.M."/>
            <person name="Almeida D.F."/>
            <person name="Almeida L.G.P."/>
            <person name="Almeida R."/>
            <person name="Alves-Junior L."/>
            <person name="Assuncao E.N."/>
            <person name="Azevedo V.A.C."/>
            <person name="Bogo M.R."/>
            <person name="Brigido M.M."/>
            <person name="Brocchi M."/>
            <person name="Burity H.A."/>
            <person name="Camargo A.A."/>
            <person name="Camargo S.S."/>
            <person name="Carepo M.S."/>
            <person name="Carraro D.M."/>
            <person name="de Mattos Cascardo J.C."/>
            <person name="Castro L.A."/>
            <person name="Cavalcanti G."/>
            <person name="Chemale G."/>
            <person name="Collevatti R.G."/>
            <person name="Cunha C.W."/>
            <person name="Dallagiovanna B."/>
            <person name="Dambros B.P."/>
            <person name="Dellagostin O.A."/>
            <person name="Falcao C."/>
            <person name="Fantinatti-Garboggini F."/>
            <person name="Felipe M.S.S."/>
            <person name="Fiorentin L."/>
            <person name="Franco G.R."/>
            <person name="Freitas N.S.A."/>
            <person name="Frias D."/>
            <person name="Grangeiro T.B."/>
            <person name="Grisard E.C."/>
            <person name="Guimaraes C.T."/>
            <person name="Hungria M."/>
            <person name="Jardim S.N."/>
            <person name="Krieger M.A."/>
            <person name="Laurino J.P."/>
            <person name="Lima L.F.A."/>
            <person name="Lopes M.I."/>
            <person name="Loreto E.L.S."/>
            <person name="Madeira H.M.F."/>
            <person name="Manfio G.P."/>
            <person name="Maranhao A.Q."/>
            <person name="Martinkovics C.T."/>
            <person name="Medeiros S.R.B."/>
            <person name="Moreira M.A.M."/>
            <person name="Neiva M."/>
            <person name="Ramalho-Neto C.E."/>
            <person name="Nicolas M.F."/>
            <person name="Oliveira S.C."/>
            <person name="Paixao R.F.C."/>
            <person name="Pedrosa F.O."/>
            <person name="Pena S.D.J."/>
            <person name="Pereira M."/>
            <person name="Pereira-Ferrari L."/>
            <person name="Piffer I."/>
            <person name="Pinto L.S."/>
            <person name="Potrich D.P."/>
            <person name="Salim A.C.M."/>
            <person name="Santos F.R."/>
            <person name="Schmitt R."/>
            <person name="Schneider M.P.C."/>
            <person name="Schrank A."/>
            <person name="Schrank I.S."/>
            <person name="Schuck A.F."/>
            <person name="Seuanez H.N."/>
            <person name="Silva D.W."/>
            <person name="Silva R."/>
            <person name="Silva S.C."/>
            <person name="Soares C.M.A."/>
            <person name="Souza K.R.L."/>
            <person name="Souza R.C."/>
            <person name="Staats C.C."/>
            <person name="Steffens M.B.R."/>
            <person name="Teixeira S.M.R."/>
            <person name="Urmenyi T.P."/>
            <person name="Vainstein M.H."/>
            <person name="Zuccherato L.W."/>
            <person name="Simpson A.J.G."/>
            <person name="Zaha A."/>
        </authorList>
    </citation>
    <scope>NUCLEOTIDE SEQUENCE [LARGE SCALE GENOMIC DNA]</scope>
    <source>
        <strain>7448</strain>
    </source>
</reference>
<dbReference type="EMBL" id="AE017244">
    <property type="protein sequence ID" value="AAZ53552.2"/>
    <property type="molecule type" value="Genomic_DNA"/>
</dbReference>
<dbReference type="SMR" id="Q4A8I7"/>
<dbReference type="KEGG" id="mhp:MHP7448_0178"/>
<dbReference type="HOGENOM" id="CLU_098841_0_1_14"/>
<dbReference type="Proteomes" id="UP000000553">
    <property type="component" value="Chromosome"/>
</dbReference>
<dbReference type="GO" id="GO:1990904">
    <property type="term" value="C:ribonucleoprotein complex"/>
    <property type="evidence" value="ECO:0007669"/>
    <property type="project" value="UniProtKB-KW"/>
</dbReference>
<dbReference type="GO" id="GO:0005840">
    <property type="term" value="C:ribosome"/>
    <property type="evidence" value="ECO:0007669"/>
    <property type="project" value="UniProtKB-KW"/>
</dbReference>
<dbReference type="GO" id="GO:0019843">
    <property type="term" value="F:rRNA binding"/>
    <property type="evidence" value="ECO:0007669"/>
    <property type="project" value="UniProtKB-UniRule"/>
</dbReference>
<dbReference type="GO" id="GO:0003735">
    <property type="term" value="F:structural constituent of ribosome"/>
    <property type="evidence" value="ECO:0007669"/>
    <property type="project" value="InterPro"/>
</dbReference>
<dbReference type="GO" id="GO:0006412">
    <property type="term" value="P:translation"/>
    <property type="evidence" value="ECO:0007669"/>
    <property type="project" value="UniProtKB-UniRule"/>
</dbReference>
<dbReference type="CDD" id="cd00432">
    <property type="entry name" value="Ribosomal_L18_L5e"/>
    <property type="match status" value="1"/>
</dbReference>
<dbReference type="Gene3D" id="3.30.420.100">
    <property type="match status" value="1"/>
</dbReference>
<dbReference type="HAMAP" id="MF_01337_B">
    <property type="entry name" value="Ribosomal_uL18_B"/>
    <property type="match status" value="1"/>
</dbReference>
<dbReference type="InterPro" id="IPR004389">
    <property type="entry name" value="Ribosomal_uL18_bac-type"/>
</dbReference>
<dbReference type="InterPro" id="IPR005484">
    <property type="entry name" value="Ribosomal_uL18_bac/euk"/>
</dbReference>
<dbReference type="NCBIfam" id="TIGR00060">
    <property type="entry name" value="L18_bact"/>
    <property type="match status" value="1"/>
</dbReference>
<dbReference type="Pfam" id="PF00861">
    <property type="entry name" value="Ribosomal_L18p"/>
    <property type="match status" value="1"/>
</dbReference>
<dbReference type="SUPFAM" id="SSF53137">
    <property type="entry name" value="Translational machinery components"/>
    <property type="match status" value="1"/>
</dbReference>
<proteinExistence type="inferred from homology"/>
<protein>
    <recommendedName>
        <fullName evidence="1">Large ribosomal subunit protein uL18</fullName>
    </recommendedName>
    <alternativeName>
        <fullName evidence="2">50S ribosomal protein L18</fullName>
    </alternativeName>
</protein>